<accession>A0A0U1RR37</accession>
<feature type="chain" id="PRO_0000441413" description="Uncharacterized protein C1orf232">
    <location>
        <begin position="1"/>
        <end position="186"/>
    </location>
</feature>
<feature type="region of interest" description="Disordered" evidence="1">
    <location>
        <begin position="17"/>
        <end position="47"/>
    </location>
</feature>
<feature type="region of interest" description="Disordered" evidence="1">
    <location>
        <begin position="77"/>
        <end position="105"/>
    </location>
</feature>
<feature type="region of interest" description="Disordered" evidence="1">
    <location>
        <begin position="121"/>
        <end position="164"/>
    </location>
</feature>
<feature type="compositionally biased region" description="Low complexity" evidence="1">
    <location>
        <begin position="90"/>
        <end position="105"/>
    </location>
</feature>
<feature type="compositionally biased region" description="Acidic residues" evidence="1">
    <location>
        <begin position="136"/>
        <end position="149"/>
    </location>
</feature>
<gene>
    <name evidence="3" type="primary">C1orf232</name>
</gene>
<keyword id="KW-1185">Reference proteome</keyword>
<sequence length="186" mass="20280">MNQAFWKTYKSKVLQTLSGESEEDLAEERENPALVGSETAEPTEETFNPMSQLARRVQGVGVKGWLTMSSLFNKEDEDKLLPSEPCADHPLAARPPSQAAAAAEARGPGFWDAFASRWQQQQAAAASMLRGTEPTPEPDPEPADEAAEEAAERPESQEAEPVAGFKWGFLTHKLAEMRVKAAPKGD</sequence>
<organism>
    <name type="scientific">Homo sapiens</name>
    <name type="common">Human</name>
    <dbReference type="NCBI Taxonomy" id="9606"/>
    <lineage>
        <taxon>Eukaryota</taxon>
        <taxon>Metazoa</taxon>
        <taxon>Chordata</taxon>
        <taxon>Craniata</taxon>
        <taxon>Vertebrata</taxon>
        <taxon>Euteleostomi</taxon>
        <taxon>Mammalia</taxon>
        <taxon>Eutheria</taxon>
        <taxon>Euarchontoglires</taxon>
        <taxon>Primates</taxon>
        <taxon>Haplorrhini</taxon>
        <taxon>Catarrhini</taxon>
        <taxon>Hominidae</taxon>
        <taxon>Homo</taxon>
    </lineage>
</organism>
<name>CA232_HUMAN</name>
<evidence type="ECO:0000256" key="1">
    <source>
        <dbReference type="SAM" id="MobiDB-lite"/>
    </source>
</evidence>
<evidence type="ECO:0000305" key="2"/>
<evidence type="ECO:0000312" key="3">
    <source>
        <dbReference type="HGNC" id="HGNC:53426"/>
    </source>
</evidence>
<dbReference type="EMBL" id="AL391650">
    <property type="status" value="NOT_ANNOTATED_CDS"/>
    <property type="molecule type" value="Genomic_DNA"/>
</dbReference>
<dbReference type="CCDS" id="CCDS90889.1"/>
<dbReference type="RefSeq" id="NP_001351598.1">
    <property type="nucleotide sequence ID" value="NM_001364669.2"/>
</dbReference>
<dbReference type="FunCoup" id="A0A0U1RR37">
    <property type="interactions" value="2"/>
</dbReference>
<dbReference type="STRING" id="9606.ENSP00000489320"/>
<dbReference type="GlyGen" id="A0A0U1RR37">
    <property type="glycosylation" value="1 site"/>
</dbReference>
<dbReference type="BioMuta" id="C1orf232"/>
<dbReference type="PeptideAtlas" id="A0A0U1RR37"/>
<dbReference type="Ensembl" id="ENST00000634842.2">
    <property type="protein sequence ID" value="ENSP00000489320.1"/>
    <property type="gene ID" value="ENSG00000282872.2"/>
</dbReference>
<dbReference type="GeneID" id="110806296"/>
<dbReference type="MANE-Select" id="ENST00000634842.2">
    <property type="protein sequence ID" value="ENSP00000489320.1"/>
    <property type="RefSeq nucleotide sequence ID" value="NM_001364669.2"/>
    <property type="RefSeq protein sequence ID" value="NP_001351598.1"/>
</dbReference>
<dbReference type="AGR" id="HGNC:53426"/>
<dbReference type="GeneCards" id="C1orf232"/>
<dbReference type="HGNC" id="HGNC:53426">
    <property type="gene designation" value="C1orf232"/>
</dbReference>
<dbReference type="HPA" id="ENSG00000282872">
    <property type="expression patterns" value="Not detected"/>
</dbReference>
<dbReference type="neXtProt" id="NX_A0A0U1RR37"/>
<dbReference type="VEuPathDB" id="HostDB:ENSG00000282872"/>
<dbReference type="GeneTree" id="ENSGT00530000067301"/>
<dbReference type="InParanoid" id="A0A0U1RR37"/>
<dbReference type="OMA" id="AGFKWGF"/>
<dbReference type="OrthoDB" id="9940890at2759"/>
<dbReference type="PAN-GO" id="A0A0U1RR37">
    <property type="GO annotations" value="0 GO annotations based on evolutionary models"/>
</dbReference>
<dbReference type="Pharos" id="A0A0U1RR37">
    <property type="development level" value="Tdark"/>
</dbReference>
<dbReference type="PRO" id="PR:A0A0U1RR37"/>
<dbReference type="Proteomes" id="UP000005640">
    <property type="component" value="Chromosome 1"/>
</dbReference>
<dbReference type="RNAct" id="A0A0U1RR37">
    <property type="molecule type" value="protein"/>
</dbReference>
<dbReference type="Bgee" id="ENSG00000282872">
    <property type="expression patterns" value="Expressed in primordial germ cell in gonad and 21 other cell types or tissues"/>
</dbReference>
<dbReference type="ExpressionAtlas" id="A0A0U1RR37">
    <property type="expression patterns" value="baseline"/>
</dbReference>
<dbReference type="PANTHER" id="PTHR35663:SF3">
    <property type="entry name" value="GENE, 30191-RELATED"/>
    <property type="match status" value="1"/>
</dbReference>
<dbReference type="PANTHER" id="PTHR35663">
    <property type="entry name" value="TESTIS DEVELOPMENT-RELATED PROTEIN-RELATED"/>
    <property type="match status" value="1"/>
</dbReference>
<reference key="1">
    <citation type="journal article" date="2006" name="Nature">
        <title>The DNA sequence and biological annotation of human chromosome 1.</title>
        <authorList>
            <person name="Gregory S.G."/>
            <person name="Barlow K.F."/>
            <person name="McLay K.E."/>
            <person name="Kaul R."/>
            <person name="Swarbreck D."/>
            <person name="Dunham A."/>
            <person name="Scott C.E."/>
            <person name="Howe K.L."/>
            <person name="Woodfine K."/>
            <person name="Spencer C.C.A."/>
            <person name="Jones M.C."/>
            <person name="Gillson C."/>
            <person name="Searle S."/>
            <person name="Zhou Y."/>
            <person name="Kokocinski F."/>
            <person name="McDonald L."/>
            <person name="Evans R."/>
            <person name="Phillips K."/>
            <person name="Atkinson A."/>
            <person name="Cooper R."/>
            <person name="Jones C."/>
            <person name="Hall R.E."/>
            <person name="Andrews T.D."/>
            <person name="Lloyd C."/>
            <person name="Ainscough R."/>
            <person name="Almeida J.P."/>
            <person name="Ambrose K.D."/>
            <person name="Anderson F."/>
            <person name="Andrew R.W."/>
            <person name="Ashwell R.I.S."/>
            <person name="Aubin K."/>
            <person name="Babbage A.K."/>
            <person name="Bagguley C.L."/>
            <person name="Bailey J."/>
            <person name="Beasley H."/>
            <person name="Bethel G."/>
            <person name="Bird C.P."/>
            <person name="Bray-Allen S."/>
            <person name="Brown J.Y."/>
            <person name="Brown A.J."/>
            <person name="Buckley D."/>
            <person name="Burton J."/>
            <person name="Bye J."/>
            <person name="Carder C."/>
            <person name="Chapman J.C."/>
            <person name="Clark S.Y."/>
            <person name="Clarke G."/>
            <person name="Clee C."/>
            <person name="Cobley V."/>
            <person name="Collier R.E."/>
            <person name="Corby N."/>
            <person name="Coville G.J."/>
            <person name="Davies J."/>
            <person name="Deadman R."/>
            <person name="Dunn M."/>
            <person name="Earthrowl M."/>
            <person name="Ellington A.G."/>
            <person name="Errington H."/>
            <person name="Frankish A."/>
            <person name="Frankland J."/>
            <person name="French L."/>
            <person name="Garner P."/>
            <person name="Garnett J."/>
            <person name="Gay L."/>
            <person name="Ghori M.R.J."/>
            <person name="Gibson R."/>
            <person name="Gilby L.M."/>
            <person name="Gillett W."/>
            <person name="Glithero R.J."/>
            <person name="Grafham D.V."/>
            <person name="Griffiths C."/>
            <person name="Griffiths-Jones S."/>
            <person name="Grocock R."/>
            <person name="Hammond S."/>
            <person name="Harrison E.S.I."/>
            <person name="Hart E."/>
            <person name="Haugen E."/>
            <person name="Heath P.D."/>
            <person name="Holmes S."/>
            <person name="Holt K."/>
            <person name="Howden P.J."/>
            <person name="Hunt A.R."/>
            <person name="Hunt S.E."/>
            <person name="Hunter G."/>
            <person name="Isherwood J."/>
            <person name="James R."/>
            <person name="Johnson C."/>
            <person name="Johnson D."/>
            <person name="Joy A."/>
            <person name="Kay M."/>
            <person name="Kershaw J.K."/>
            <person name="Kibukawa M."/>
            <person name="Kimberley A.M."/>
            <person name="King A."/>
            <person name="Knights A.J."/>
            <person name="Lad H."/>
            <person name="Laird G."/>
            <person name="Lawlor S."/>
            <person name="Leongamornlert D.A."/>
            <person name="Lloyd D.M."/>
            <person name="Loveland J."/>
            <person name="Lovell J."/>
            <person name="Lush M.J."/>
            <person name="Lyne R."/>
            <person name="Martin S."/>
            <person name="Mashreghi-Mohammadi M."/>
            <person name="Matthews L."/>
            <person name="Matthews N.S.W."/>
            <person name="McLaren S."/>
            <person name="Milne S."/>
            <person name="Mistry S."/>
            <person name="Moore M.J.F."/>
            <person name="Nickerson T."/>
            <person name="O'Dell C.N."/>
            <person name="Oliver K."/>
            <person name="Palmeiri A."/>
            <person name="Palmer S.A."/>
            <person name="Parker A."/>
            <person name="Patel D."/>
            <person name="Pearce A.V."/>
            <person name="Peck A.I."/>
            <person name="Pelan S."/>
            <person name="Phelps K."/>
            <person name="Phillimore B.J."/>
            <person name="Plumb R."/>
            <person name="Rajan J."/>
            <person name="Raymond C."/>
            <person name="Rouse G."/>
            <person name="Saenphimmachak C."/>
            <person name="Sehra H.K."/>
            <person name="Sheridan E."/>
            <person name="Shownkeen R."/>
            <person name="Sims S."/>
            <person name="Skuce C.D."/>
            <person name="Smith M."/>
            <person name="Steward C."/>
            <person name="Subramanian S."/>
            <person name="Sycamore N."/>
            <person name="Tracey A."/>
            <person name="Tromans A."/>
            <person name="Van Helmond Z."/>
            <person name="Wall M."/>
            <person name="Wallis J.M."/>
            <person name="White S."/>
            <person name="Whitehead S.L."/>
            <person name="Wilkinson J.E."/>
            <person name="Willey D.L."/>
            <person name="Williams H."/>
            <person name="Wilming L."/>
            <person name="Wray P.W."/>
            <person name="Wu Z."/>
            <person name="Coulson A."/>
            <person name="Vaudin M."/>
            <person name="Sulston J.E."/>
            <person name="Durbin R.M."/>
            <person name="Hubbard T."/>
            <person name="Wooster R."/>
            <person name="Dunham I."/>
            <person name="Carter N.P."/>
            <person name="McVean G."/>
            <person name="Ross M.T."/>
            <person name="Harrow J."/>
            <person name="Olson M.V."/>
            <person name="Beck S."/>
            <person name="Rogers J."/>
            <person name="Bentley D.R."/>
        </authorList>
    </citation>
    <scope>NUCLEOTIDE SEQUENCE [LARGE SCALE GENOMIC DNA]</scope>
</reference>
<protein>
    <recommendedName>
        <fullName evidence="2">Uncharacterized protein C1orf232</fullName>
    </recommendedName>
</protein>
<proteinExistence type="predicted"/>